<sequence length="1374" mass="144569">MSSSFFNPSFAFSSHFDPDGAPLSELSWPSSLAVVAVSFSGLFAVIVLMLACLCCKKGGIGFKEFENAEGDEYAADLAQGSPATAAQNGPDVYVLPLTEVSLPMAKQPGRSVQLLKSTDVGRHSLLYLKEIGRGWFGKVFLGEVNSGISSAQVVVKELQASASVQEQMQFLEEVQPYRALKHSNLLQCLAQCAEVTPYLLVMEFCPLGDLKGYLRSCRVAESMAPDPRTLQRMACEVACGVLHLHRNNFVHSDLALRNCLLTADLTVKIGDYGLAHCKYREDYFVTADQLWVPLRWIAPELVDEVHSNLLVVDQTKSGNVWSLGVTIWELFELGTQPYPQHSDQQVLAYTVREQQLKLPKPQLQLTLSDRWYEVMQFCWLQPEQRPTAEEVHLLLSYLCAKGATEAEEEFERRWRSLRPGGGGVGPGPGAAGPMLGGVVELAAASSFPLLEQFAGDGFHADGDDVLTVTETSRGLNFEYKWEAGRGAEAFPATLSPGRTARLQELCAPDGAPPGVVPVLSAHSPSLGSEYFIRLEEAAPAAGHDPDCAGCAPSPPATADQDDDSDGSTAASLAMEPLLGHGPPVDVPWGRGDHYPRRSLARDPLCPSRSPSPSAGPLSLAEGGAEDADWGVAAFCPAFFEDPLGTSPLGSSGAPPLPLTGEDELEEVGARRAAQRGHWRSNVSANNNSGSRCPESWDPVSAGGHAEGCPSPKQTPRASPEPGYPGEPLLGLQAASAQEPGCCPGLPHLCSAQGLAPAPCLVTPSWTETASSGGDHPQAEPKLATEAEGTTGPRLPLPSVPSPSQEGAPLPSEEASAPDAPDALPDSPTPATGGEVSAIKLASALNGSSSSPEVEAPSSEDEDTAEATSGIFTDTSSDGLQARRPDVVPAFRSLQKQVGTPDSLDSLDIPSSASDGGYEVFSPSATGPSGGQPRALDSGYDTENYESPEFVLKEAQEGCEPQAFAELASEGEGPGPETRLSTSLSGLNEKNPYRDSAYFSDLEAEAEATSGPEKKCGGDRAPGPELGLPSTGQPSEQVCLRPGVSGEAQGSGPGEVLPPLLQLEGSSPEPSTCPSGLVPEPPEPQGPAKVRPGPSPSCSQFFLLTPVPLRSEGNSSEFQGPPGLLSGPAPQKRMGGPGTPRAPLRLALPGLPAALEGRPEEEEEDSEDSDESDEELRCYSVQEPSEDSEEEAPAVPVVVAESQSARNLRSLLKMPSLLSETFCEDLERKKKAVSFFDDVTVYLFDQESPTRELGEPFPGAKESPPTFLRGSPGSPSAPNRPQQADGSPNGSTAEEGGGFAWDDDFPLMTAKAAFAMALDPAAPAPAAPTPTPAPFSRFTVSPAPTSRFSITHVSDSDAESKRGPEAGAGGESKEA</sequence>
<accession>Q6ZMQ8</accession>
<accession>O75136</accession>
<accession>Q6ZN31</accession>
<accession>Q86X28</accession>
<organism>
    <name type="scientific">Homo sapiens</name>
    <name type="common">Human</name>
    <dbReference type="NCBI Taxonomy" id="9606"/>
    <lineage>
        <taxon>Eukaryota</taxon>
        <taxon>Metazoa</taxon>
        <taxon>Chordata</taxon>
        <taxon>Craniata</taxon>
        <taxon>Vertebrata</taxon>
        <taxon>Euteleostomi</taxon>
        <taxon>Mammalia</taxon>
        <taxon>Eutheria</taxon>
        <taxon>Euarchontoglires</taxon>
        <taxon>Primates</taxon>
        <taxon>Haplorrhini</taxon>
        <taxon>Catarrhini</taxon>
        <taxon>Hominidae</taxon>
        <taxon>Homo</taxon>
    </lineage>
</organism>
<feature type="chain" id="PRO_0000248300" description="Serine/threonine-protein kinase LMTK1">
    <location>
        <begin position="1"/>
        <end position="1374"/>
    </location>
</feature>
<feature type="transmembrane region" description="Helical" evidence="3">
    <location>
        <begin position="32"/>
        <end position="52"/>
    </location>
</feature>
<feature type="domain" description="Protein kinase" evidence="4">
    <location>
        <begin position="125"/>
        <end position="395"/>
    </location>
</feature>
<feature type="region of interest" description="Disordered" evidence="6">
    <location>
        <begin position="542"/>
        <end position="622"/>
    </location>
</feature>
<feature type="region of interest" description="Disordered" evidence="6">
    <location>
        <begin position="667"/>
        <end position="731"/>
    </location>
</feature>
<feature type="region of interest" description="Disordered" evidence="6">
    <location>
        <begin position="765"/>
        <end position="1195"/>
    </location>
</feature>
<feature type="region of interest" description="Disordered" evidence="6">
    <location>
        <begin position="1245"/>
        <end position="1302"/>
    </location>
</feature>
<feature type="region of interest" description="Disordered" evidence="6">
    <location>
        <begin position="1320"/>
        <end position="1374"/>
    </location>
</feature>
<feature type="compositionally biased region" description="Low complexity" evidence="6">
    <location>
        <begin position="606"/>
        <end position="620"/>
    </location>
</feature>
<feature type="compositionally biased region" description="Polar residues" evidence="6">
    <location>
        <begin position="680"/>
        <end position="690"/>
    </location>
</feature>
<feature type="compositionally biased region" description="Low complexity" evidence="6">
    <location>
        <begin position="719"/>
        <end position="731"/>
    </location>
</feature>
<feature type="compositionally biased region" description="Low complexity" evidence="6">
    <location>
        <begin position="801"/>
        <end position="831"/>
    </location>
</feature>
<feature type="compositionally biased region" description="Low complexity" evidence="6">
    <location>
        <begin position="847"/>
        <end position="856"/>
    </location>
</feature>
<feature type="compositionally biased region" description="Polar residues" evidence="6">
    <location>
        <begin position="865"/>
        <end position="878"/>
    </location>
</feature>
<feature type="compositionally biased region" description="Low complexity" evidence="6">
    <location>
        <begin position="900"/>
        <end position="914"/>
    </location>
</feature>
<feature type="compositionally biased region" description="Polar residues" evidence="6">
    <location>
        <begin position="978"/>
        <end position="987"/>
    </location>
</feature>
<feature type="compositionally biased region" description="Polar residues" evidence="6">
    <location>
        <begin position="1063"/>
        <end position="1073"/>
    </location>
</feature>
<feature type="compositionally biased region" description="Low complexity" evidence="6">
    <location>
        <begin position="1138"/>
        <end position="1155"/>
    </location>
</feature>
<feature type="compositionally biased region" description="Acidic residues" evidence="6">
    <location>
        <begin position="1158"/>
        <end position="1173"/>
    </location>
</feature>
<feature type="compositionally biased region" description="Polar residues" evidence="6">
    <location>
        <begin position="1272"/>
        <end position="1291"/>
    </location>
</feature>
<feature type="compositionally biased region" description="Pro residues" evidence="6">
    <location>
        <begin position="1321"/>
        <end position="1332"/>
    </location>
</feature>
<feature type="compositionally biased region" description="Polar residues" evidence="6">
    <location>
        <begin position="1337"/>
        <end position="1352"/>
    </location>
</feature>
<feature type="compositionally biased region" description="Basic and acidic residues" evidence="6">
    <location>
        <begin position="1353"/>
        <end position="1363"/>
    </location>
</feature>
<feature type="compositionally biased region" description="Gly residues" evidence="6">
    <location>
        <begin position="1365"/>
        <end position="1374"/>
    </location>
</feature>
<feature type="active site" description="Proton acceptor" evidence="4 5">
    <location>
        <position position="253"/>
    </location>
</feature>
<feature type="binding site" evidence="4">
    <location>
        <begin position="131"/>
        <end position="139"/>
    </location>
    <ligand>
        <name>ATP</name>
        <dbReference type="ChEBI" id="CHEBI:30616"/>
    </ligand>
</feature>
<feature type="binding site" evidence="4">
    <location>
        <position position="156"/>
    </location>
    <ligand>
        <name>ATP</name>
        <dbReference type="ChEBI" id="CHEBI:30616"/>
    </ligand>
</feature>
<feature type="modified residue" description="Phosphoserine" evidence="15">
    <location>
        <position position="495"/>
    </location>
</feature>
<feature type="modified residue" description="Phosphoserine" evidence="2">
    <location>
        <position position="1029"/>
    </location>
</feature>
<feature type="modified residue" description="Phosphoserine" evidence="2">
    <location>
        <position position="1168"/>
    </location>
</feature>
<feature type="modified residue" description="Phosphoserine" evidence="2">
    <location>
        <position position="1171"/>
    </location>
</feature>
<feature type="modified residue" description="Phosphoserine" evidence="2">
    <location>
        <position position="1184"/>
    </location>
</feature>
<feature type="modified residue" description="Phosphoserine" evidence="2">
    <location>
        <position position="1187"/>
    </location>
</feature>
<feature type="modified residue" description="Phosphoserine" evidence="15">
    <location>
        <position position="1262"/>
    </location>
</feature>
<feature type="splice variant" id="VSP_020225" description="In isoform 2." evidence="13">
    <location>
        <begin position="1"/>
        <end position="433"/>
    </location>
</feature>
<feature type="splice variant" id="VSP_020226" description="In isoform 2 and isoform 3." evidence="13">
    <location>
        <begin position="468"/>
        <end position="503"/>
    </location>
</feature>
<feature type="splice variant" id="VSP_020227" description="In isoform 2 and isoform 3." evidence="13">
    <original>VGTPDSLDSLDIPSSASDG</original>
    <variation>WPQREESLPRLCLLLRPRG</variation>
    <location>
        <begin position="897"/>
        <end position="915"/>
    </location>
</feature>
<feature type="splice variant" id="VSP_020228" description="In isoform 2 and isoform 3." evidence="13">
    <location>
        <begin position="916"/>
        <end position="1374"/>
    </location>
</feature>
<feature type="sequence variant" id="VAR_032679" description="In an ovarian mucinous carcinoma sample; somatic mutation; dbSNP:rs2060924369." evidence="11">
    <original>S</original>
    <variation>F</variation>
    <location>
        <position position="81"/>
    </location>
</feature>
<feature type="sequence variant" id="VAR_032680" description="In a lung adenocarcinoma sample; somatic mutation." evidence="11">
    <original>L</original>
    <variation>V</variation>
    <location>
        <position position="97"/>
    </location>
</feature>
<feature type="sequence variant" id="VAR_032681" description="In an ovarian mucinous carcinoma sample; somatic mutation; dbSNP:rs1337040042." evidence="11">
    <original>M</original>
    <variation>V</variation>
    <location>
        <position position="104"/>
    </location>
</feature>
<feature type="sequence variant" id="VAR_027267" description="In dbSNP:rs8082016.">
    <original>T</original>
    <variation>M</variation>
    <location>
        <position position="118"/>
    </location>
</feature>
<feature type="sequence variant" id="VAR_032682" description="In dbSNP:rs7503604." evidence="9 11 12">
    <original>G</original>
    <variation>C</variation>
    <location>
        <position position="703"/>
    </location>
</feature>
<feature type="sequence variant" id="VAR_032683" description="In dbSNP:rs56032966." evidence="11">
    <original>S</original>
    <variation>R</variation>
    <location>
        <position position="815"/>
    </location>
</feature>
<feature type="sequence variant" id="VAR_032684" description="In dbSNP:rs56313973." evidence="11">
    <original>S</original>
    <variation>L</variation>
    <location>
        <position position="923"/>
    </location>
</feature>
<feature type="sequence variant" id="VAR_032685" description="In dbSNP:rs55793641." evidence="11">
    <original>E</original>
    <variation>K</variation>
    <location>
        <position position="1160"/>
    </location>
</feature>
<feature type="sequence variant" id="VAR_032686" description="In dbSNP:rs55856613." evidence="11">
    <original>P</original>
    <variation>S</variation>
    <location>
        <position position="1192"/>
    </location>
</feature>
<feature type="sequence variant" id="VAR_032687" description="In dbSNP:rs36000545." evidence="10 11">
    <original>F</original>
    <variation>S</variation>
    <location>
        <position position="1266"/>
    </location>
</feature>
<feature type="sequence variant" id="VAR_032688" description="In dbSNP:rs55713566." evidence="11">
    <original>A</original>
    <variation>T</variation>
    <location>
        <position position="1332"/>
    </location>
</feature>
<feature type="sequence conflict" description="In Ref. 2." evidence="14" ref="2">
    <original>MLACLCCKKGGIGFK</original>
    <variation>HQVKVQGCWGRWRWQ</variation>
    <location>
        <begin position="49"/>
        <end position="63"/>
    </location>
</feature>
<feature type="sequence conflict" description="In Ref. 1; BAD18667." evidence="14" ref="1">
    <original>A</original>
    <variation>T</variation>
    <location>
        <position position="511"/>
    </location>
</feature>
<feature type="sequence conflict" description="In Ref. 1; BAD18544." evidence="14" ref="1">
    <original>A</original>
    <variation>T</variation>
    <location>
        <position position="541"/>
    </location>
</feature>
<feature type="sequence conflict" description="In Ref. 1; BAD18544." evidence="14" ref="1">
    <original>T</original>
    <variation>I</variation>
    <location>
        <position position="557"/>
    </location>
</feature>
<feature type="sequence conflict" description="In Ref. 4; AAH47378." evidence="14" ref="4">
    <original>A</original>
    <variation>V</variation>
    <location>
        <position position="786"/>
    </location>
</feature>
<feature type="sequence conflict" description="In Ref. 1; BAD18667." evidence="14" ref="1">
    <original>T</original>
    <variation>A</variation>
    <location>
        <position position="790"/>
    </location>
</feature>
<feature type="sequence conflict" description="In Ref. 4; AAH47378." evidence="14" ref="4">
    <original>P</original>
    <variation>R</variation>
    <location>
        <position position="1028"/>
    </location>
</feature>
<feature type="sequence conflict" description="In Ref. 4; AAH47378." evidence="14" ref="4">
    <original>P</original>
    <variation>H</variation>
    <location>
        <position position="1271"/>
    </location>
</feature>
<feature type="sequence conflict" description="In Ref. 4; AAH47378." evidence="14" ref="4">
    <original>P</original>
    <variation>R</variation>
    <location>
        <position position="1324"/>
    </location>
</feature>
<feature type="sequence conflict" description="In Ref. 4; AAH47378." evidence="14" ref="4">
    <original>K</original>
    <variation>E</variation>
    <location>
        <position position="1360"/>
    </location>
</feature>
<gene>
    <name type="primary">AATK</name>
    <name type="synonym">AATYK</name>
    <name type="synonym">KIAA0641</name>
    <name type="synonym">LMR1</name>
    <name type="synonym">LMTK1</name>
</gene>
<name>LMTK1_HUMAN</name>
<reference key="1">
    <citation type="journal article" date="2004" name="Nat. Genet.">
        <title>Complete sequencing and characterization of 21,243 full-length human cDNAs.</title>
        <authorList>
            <person name="Ota T."/>
            <person name="Suzuki Y."/>
            <person name="Nishikawa T."/>
            <person name="Otsuki T."/>
            <person name="Sugiyama T."/>
            <person name="Irie R."/>
            <person name="Wakamatsu A."/>
            <person name="Hayashi K."/>
            <person name="Sato H."/>
            <person name="Nagai K."/>
            <person name="Kimura K."/>
            <person name="Makita H."/>
            <person name="Sekine M."/>
            <person name="Obayashi M."/>
            <person name="Nishi T."/>
            <person name="Shibahara T."/>
            <person name="Tanaka T."/>
            <person name="Ishii S."/>
            <person name="Yamamoto J."/>
            <person name="Saito K."/>
            <person name="Kawai Y."/>
            <person name="Isono Y."/>
            <person name="Nakamura Y."/>
            <person name="Nagahari K."/>
            <person name="Murakami K."/>
            <person name="Yasuda T."/>
            <person name="Iwayanagi T."/>
            <person name="Wagatsuma M."/>
            <person name="Shiratori A."/>
            <person name="Sudo H."/>
            <person name="Hosoiri T."/>
            <person name="Kaku Y."/>
            <person name="Kodaira H."/>
            <person name="Kondo H."/>
            <person name="Sugawara M."/>
            <person name="Takahashi M."/>
            <person name="Kanda K."/>
            <person name="Yokoi T."/>
            <person name="Furuya T."/>
            <person name="Kikkawa E."/>
            <person name="Omura Y."/>
            <person name="Abe K."/>
            <person name="Kamihara K."/>
            <person name="Katsuta N."/>
            <person name="Sato K."/>
            <person name="Tanikawa M."/>
            <person name="Yamazaki M."/>
            <person name="Ninomiya K."/>
            <person name="Ishibashi T."/>
            <person name="Yamashita H."/>
            <person name="Murakawa K."/>
            <person name="Fujimori K."/>
            <person name="Tanai H."/>
            <person name="Kimata M."/>
            <person name="Watanabe M."/>
            <person name="Hiraoka S."/>
            <person name="Chiba Y."/>
            <person name="Ishida S."/>
            <person name="Ono Y."/>
            <person name="Takiguchi S."/>
            <person name="Watanabe S."/>
            <person name="Yosida M."/>
            <person name="Hotuta T."/>
            <person name="Kusano J."/>
            <person name="Kanehori K."/>
            <person name="Takahashi-Fujii A."/>
            <person name="Hara H."/>
            <person name="Tanase T.-O."/>
            <person name="Nomura Y."/>
            <person name="Togiya S."/>
            <person name="Komai F."/>
            <person name="Hara R."/>
            <person name="Takeuchi K."/>
            <person name="Arita M."/>
            <person name="Imose N."/>
            <person name="Musashino K."/>
            <person name="Yuuki H."/>
            <person name="Oshima A."/>
            <person name="Sasaki N."/>
            <person name="Aotsuka S."/>
            <person name="Yoshikawa Y."/>
            <person name="Matsunawa H."/>
            <person name="Ichihara T."/>
            <person name="Shiohata N."/>
            <person name="Sano S."/>
            <person name="Moriya S."/>
            <person name="Momiyama H."/>
            <person name="Satoh N."/>
            <person name="Takami S."/>
            <person name="Terashima Y."/>
            <person name="Suzuki O."/>
            <person name="Nakagawa S."/>
            <person name="Senoh A."/>
            <person name="Mizoguchi H."/>
            <person name="Goto Y."/>
            <person name="Shimizu F."/>
            <person name="Wakebe H."/>
            <person name="Hishigaki H."/>
            <person name="Watanabe T."/>
            <person name="Sugiyama A."/>
            <person name="Takemoto M."/>
            <person name="Kawakami B."/>
            <person name="Yamazaki M."/>
            <person name="Watanabe K."/>
            <person name="Kumagai A."/>
            <person name="Itakura S."/>
            <person name="Fukuzumi Y."/>
            <person name="Fujimori Y."/>
            <person name="Komiyama M."/>
            <person name="Tashiro H."/>
            <person name="Tanigami A."/>
            <person name="Fujiwara T."/>
            <person name="Ono T."/>
            <person name="Yamada K."/>
            <person name="Fujii Y."/>
            <person name="Ozaki K."/>
            <person name="Hirao M."/>
            <person name="Ohmori Y."/>
            <person name="Kawabata A."/>
            <person name="Hikiji T."/>
            <person name="Kobatake N."/>
            <person name="Inagaki H."/>
            <person name="Ikema Y."/>
            <person name="Okamoto S."/>
            <person name="Okitani R."/>
            <person name="Kawakami T."/>
            <person name="Noguchi S."/>
            <person name="Itoh T."/>
            <person name="Shigeta K."/>
            <person name="Senba T."/>
            <person name="Matsumura K."/>
            <person name="Nakajima Y."/>
            <person name="Mizuno T."/>
            <person name="Morinaga M."/>
            <person name="Sasaki M."/>
            <person name="Togashi T."/>
            <person name="Oyama M."/>
            <person name="Hata H."/>
            <person name="Watanabe M."/>
            <person name="Komatsu T."/>
            <person name="Mizushima-Sugano J."/>
            <person name="Satoh T."/>
            <person name="Shirai Y."/>
            <person name="Takahashi Y."/>
            <person name="Nakagawa K."/>
            <person name="Okumura K."/>
            <person name="Nagase T."/>
            <person name="Nomura N."/>
            <person name="Kikuchi H."/>
            <person name="Masuho Y."/>
            <person name="Yamashita R."/>
            <person name="Nakai K."/>
            <person name="Yada T."/>
            <person name="Nakamura Y."/>
            <person name="Ohara O."/>
            <person name="Isogai T."/>
            <person name="Sugano S."/>
        </authorList>
    </citation>
    <scope>NUCLEOTIDE SEQUENCE [LARGE SCALE MRNA] (ISOFORMS 2 AND 3)</scope>
    <scope>VARIANT CYS-703</scope>
    <source>
        <tissue>Cerebellum</tissue>
        <tissue>Thalamus</tissue>
    </source>
</reference>
<reference key="2">
    <citation type="journal article" date="1998" name="DNA Res.">
        <title>Prediction of the coding sequences of unidentified human genes. X. The complete sequences of 100 new cDNA clones from brain which can code for large proteins in vitro.</title>
        <authorList>
            <person name="Ishikawa K."/>
            <person name="Nagase T."/>
            <person name="Suyama M."/>
            <person name="Miyajima N."/>
            <person name="Tanaka A."/>
            <person name="Kotani H."/>
            <person name="Nomura N."/>
            <person name="Ohara O."/>
        </authorList>
    </citation>
    <scope>NUCLEOTIDE SEQUENCE [LARGE SCALE MRNA] OF 49-1374 (ISOFORM 1)</scope>
    <scope>VARIANT CYS-703</scope>
    <source>
        <tissue>Brain</tissue>
    </source>
</reference>
<reference key="3">
    <citation type="journal article" date="2002" name="DNA Res.">
        <title>Construction of expression-ready cDNA clones for KIAA genes: manual curation of 330 KIAA cDNA clones.</title>
        <authorList>
            <person name="Nakajima D."/>
            <person name="Okazaki N."/>
            <person name="Yamakawa H."/>
            <person name="Kikuno R."/>
            <person name="Ohara O."/>
            <person name="Nagase T."/>
        </authorList>
    </citation>
    <scope>SEQUENCE REVISION</scope>
</reference>
<reference key="4">
    <citation type="journal article" date="2004" name="Genome Res.">
        <title>The status, quality, and expansion of the NIH full-length cDNA project: the Mammalian Gene Collection (MGC).</title>
        <authorList>
            <consortium name="The MGC Project Team"/>
        </authorList>
    </citation>
    <scope>NUCLEOTIDE SEQUENCE [LARGE SCALE MRNA] OF 786-1374 (ISOFORM 1)</scope>
    <scope>VARIANT SER-1266</scope>
    <source>
        <tissue>Brain</tissue>
    </source>
</reference>
<reference key="5">
    <citation type="journal article" date="2003" name="Biochem. Biophys. Res. Commun.">
        <title>Apoptosis-associated tyrosine kinase is a Cdk5 activator p35 binding protein.</title>
        <authorList>
            <person name="Honma N."/>
            <person name="Asada A."/>
            <person name="Takeshita S."/>
            <person name="Enomoto M."/>
            <person name="Yamakawa E."/>
            <person name="Tsutsumi K."/>
            <person name="Saito T."/>
            <person name="Satoh T."/>
            <person name="Itoh H."/>
            <person name="Kaziro Y."/>
            <person name="Kishimoto T."/>
            <person name="Hisanaga S."/>
        </authorList>
    </citation>
    <scope>ALTERNATIVE SPLICING (ISOFORM 2)</scope>
    <scope>INTERACTION WITH CDK5</scope>
    <scope>PHOSPHORYLATION</scope>
</reference>
<reference key="6">
    <citation type="journal article" date="2000" name="Brain Res. Mol. Brain Res.">
        <title>A novel kinase, AATYK induces and promotes neuronal differentiation in a human neuroblastoma (SH-SY5Y) cell line.</title>
        <authorList>
            <person name="Raghunath M."/>
            <person name="Patti R."/>
            <person name="Bannerman P."/>
            <person name="Lee C.M."/>
            <person name="Baker S."/>
            <person name="Sutton L.N."/>
            <person name="Phillips P.C."/>
            <person name="Damodar Reddy C."/>
        </authorList>
    </citation>
    <scope>TISSUE SPECIFICITY</scope>
    <scope>SUBCELLULAR LOCATION</scope>
    <scope>FUNCTION</scope>
</reference>
<reference key="7">
    <citation type="journal article" date="2013" name="J. Proteome Res.">
        <title>Toward a comprehensive characterization of a human cancer cell phosphoproteome.</title>
        <authorList>
            <person name="Zhou H."/>
            <person name="Di Palma S."/>
            <person name="Preisinger C."/>
            <person name="Peng M."/>
            <person name="Polat A.N."/>
            <person name="Heck A.J."/>
            <person name="Mohammed S."/>
        </authorList>
    </citation>
    <scope>PHOSPHORYLATION [LARGE SCALE ANALYSIS] AT SER-495 AND SER-1262</scope>
    <scope>IDENTIFICATION BY MASS SPECTROMETRY [LARGE SCALE ANALYSIS]</scope>
    <source>
        <tissue>Cervix carcinoma</tissue>
    </source>
</reference>
<reference key="8">
    <citation type="journal article" date="2007" name="Nature">
        <title>Patterns of somatic mutation in human cancer genomes.</title>
        <authorList>
            <person name="Greenman C."/>
            <person name="Stephens P."/>
            <person name="Smith R."/>
            <person name="Dalgliesh G.L."/>
            <person name="Hunter C."/>
            <person name="Bignell G."/>
            <person name="Davies H."/>
            <person name="Teague J."/>
            <person name="Butler A."/>
            <person name="Stevens C."/>
            <person name="Edkins S."/>
            <person name="O'Meara S."/>
            <person name="Vastrik I."/>
            <person name="Schmidt E.E."/>
            <person name="Avis T."/>
            <person name="Barthorpe S."/>
            <person name="Bhamra G."/>
            <person name="Buck G."/>
            <person name="Choudhury B."/>
            <person name="Clements J."/>
            <person name="Cole J."/>
            <person name="Dicks E."/>
            <person name="Forbes S."/>
            <person name="Gray K."/>
            <person name="Halliday K."/>
            <person name="Harrison R."/>
            <person name="Hills K."/>
            <person name="Hinton J."/>
            <person name="Jenkinson A."/>
            <person name="Jones D."/>
            <person name="Menzies A."/>
            <person name="Mironenko T."/>
            <person name="Perry J."/>
            <person name="Raine K."/>
            <person name="Richardson D."/>
            <person name="Shepherd R."/>
            <person name="Small A."/>
            <person name="Tofts C."/>
            <person name="Varian J."/>
            <person name="Webb T."/>
            <person name="West S."/>
            <person name="Widaa S."/>
            <person name="Yates A."/>
            <person name="Cahill D.P."/>
            <person name="Louis D.N."/>
            <person name="Goldstraw P."/>
            <person name="Nicholson A.G."/>
            <person name="Brasseur F."/>
            <person name="Looijenga L."/>
            <person name="Weber B.L."/>
            <person name="Chiew Y.-E."/>
            <person name="DeFazio A."/>
            <person name="Greaves M.F."/>
            <person name="Green A.R."/>
            <person name="Campbell P."/>
            <person name="Birney E."/>
            <person name="Easton D.F."/>
            <person name="Chenevix-Trench G."/>
            <person name="Tan M.-H."/>
            <person name="Khoo S.K."/>
            <person name="Teh B.T."/>
            <person name="Yuen S.T."/>
            <person name="Leung S.Y."/>
            <person name="Wooster R."/>
            <person name="Futreal P.A."/>
            <person name="Stratton M.R."/>
        </authorList>
    </citation>
    <scope>VARIANTS PHE-81; VAL-97; VAL-104; CYS-703; ARG-815; LEU-923; LYS-1160; SER-1192; SER-1266 AND THR-1332</scope>
</reference>
<dbReference type="EC" id="2.7.11.1"/>
<dbReference type="EMBL" id="AK131395">
    <property type="protein sequence ID" value="BAD18544.1"/>
    <property type="molecule type" value="mRNA"/>
</dbReference>
<dbReference type="EMBL" id="AK131529">
    <property type="protein sequence ID" value="BAD18667.1"/>
    <property type="molecule type" value="mRNA"/>
</dbReference>
<dbReference type="EMBL" id="AB014541">
    <property type="protein sequence ID" value="BAA31616.2"/>
    <property type="molecule type" value="mRNA"/>
</dbReference>
<dbReference type="EMBL" id="BC047378">
    <property type="protein sequence ID" value="AAH47378.1"/>
    <property type="molecule type" value="mRNA"/>
</dbReference>
<dbReference type="CCDS" id="CCDS45807.1">
    <molecule id="Q6ZMQ8-1"/>
</dbReference>
<dbReference type="RefSeq" id="NP_001073864.2">
    <molecule id="Q6ZMQ8-1"/>
    <property type="nucleotide sequence ID" value="NM_001080395.3"/>
</dbReference>
<dbReference type="RefSeq" id="NP_004911.2">
    <property type="nucleotide sequence ID" value="NM_004920.2"/>
</dbReference>
<dbReference type="SMR" id="Q6ZMQ8"/>
<dbReference type="BioGRID" id="114984">
    <property type="interactions" value="194"/>
</dbReference>
<dbReference type="FunCoup" id="Q6ZMQ8">
    <property type="interactions" value="75"/>
</dbReference>
<dbReference type="IntAct" id="Q6ZMQ8">
    <property type="interactions" value="190"/>
</dbReference>
<dbReference type="MINT" id="Q6ZMQ8"/>
<dbReference type="STRING" id="9606.ENSP00000324196"/>
<dbReference type="TCDB" id="8.A.23.1.35">
    <property type="family name" value="the basigin (basigin) family"/>
</dbReference>
<dbReference type="GlyGen" id="Q6ZMQ8">
    <property type="glycosylation" value="4 sites"/>
</dbReference>
<dbReference type="iPTMnet" id="Q6ZMQ8"/>
<dbReference type="PhosphoSitePlus" id="Q6ZMQ8"/>
<dbReference type="SwissPalm" id="Q6ZMQ8"/>
<dbReference type="BioMuta" id="AATK"/>
<dbReference type="DMDM" id="114149222"/>
<dbReference type="jPOST" id="Q6ZMQ8"/>
<dbReference type="MassIVE" id="Q6ZMQ8"/>
<dbReference type="PaxDb" id="9606-ENSP00000324196"/>
<dbReference type="PeptideAtlas" id="Q6ZMQ8"/>
<dbReference type="ProteomicsDB" id="67901">
    <molecule id="Q6ZMQ8-1"/>
</dbReference>
<dbReference type="ProteomicsDB" id="67902">
    <molecule id="Q6ZMQ8-2"/>
</dbReference>
<dbReference type="ProteomicsDB" id="67903">
    <molecule id="Q6ZMQ8-3"/>
</dbReference>
<dbReference type="Antibodypedia" id="2104">
    <property type="antibodies" value="203 antibodies from 28 providers"/>
</dbReference>
<dbReference type="DNASU" id="9625"/>
<dbReference type="Ensembl" id="ENST00000326724.9">
    <molecule id="Q6ZMQ8-1"/>
    <property type="protein sequence ID" value="ENSP00000324196.4"/>
    <property type="gene ID" value="ENSG00000181409.14"/>
</dbReference>
<dbReference type="Ensembl" id="ENST00000374792.6">
    <molecule id="Q6ZMQ8-3"/>
    <property type="protein sequence ID" value="ENSP00000363924.2"/>
    <property type="gene ID" value="ENSG00000181409.14"/>
</dbReference>
<dbReference type="GeneID" id="9625"/>
<dbReference type="KEGG" id="hsa:9625"/>
<dbReference type="MANE-Select" id="ENST00000326724.9">
    <property type="protein sequence ID" value="ENSP00000324196.4"/>
    <property type="RefSeq nucleotide sequence ID" value="NM_001080395.3"/>
    <property type="RefSeq protein sequence ID" value="NP_001073864.2"/>
</dbReference>
<dbReference type="UCSC" id="uc010dia.4">
    <molecule id="Q6ZMQ8-1"/>
    <property type="organism name" value="human"/>
</dbReference>
<dbReference type="AGR" id="HGNC:21"/>
<dbReference type="CTD" id="9625"/>
<dbReference type="DisGeNET" id="9625"/>
<dbReference type="GeneCards" id="AATK"/>
<dbReference type="HGNC" id="HGNC:21">
    <property type="gene designation" value="AATK"/>
</dbReference>
<dbReference type="HPA" id="ENSG00000181409">
    <property type="expression patterns" value="Tissue enhanced (brain, intestine)"/>
</dbReference>
<dbReference type="MIM" id="605276">
    <property type="type" value="gene"/>
</dbReference>
<dbReference type="neXtProt" id="NX_Q6ZMQ8"/>
<dbReference type="OpenTargets" id="ENSG00000181409"/>
<dbReference type="PharmGKB" id="PA24370"/>
<dbReference type="VEuPathDB" id="HostDB:ENSG00000181409"/>
<dbReference type="eggNOG" id="ENOG502RCHK">
    <property type="taxonomic scope" value="Eukaryota"/>
</dbReference>
<dbReference type="GeneTree" id="ENSGT00940000154244"/>
<dbReference type="HOGENOM" id="CLU_004618_1_0_1"/>
<dbReference type="InParanoid" id="Q6ZMQ8"/>
<dbReference type="OMA" id="WEPPDYY"/>
<dbReference type="PAN-GO" id="Q6ZMQ8">
    <property type="GO annotations" value="3 GO annotations based on evolutionary models"/>
</dbReference>
<dbReference type="PhylomeDB" id="Q6ZMQ8"/>
<dbReference type="TreeFam" id="TF332280"/>
<dbReference type="PathwayCommons" id="Q6ZMQ8"/>
<dbReference type="SignaLink" id="Q6ZMQ8"/>
<dbReference type="SIGNOR" id="Q6ZMQ8"/>
<dbReference type="BioGRID-ORCS" id="9625">
    <property type="hits" value="23 hits in 1182 CRISPR screens"/>
</dbReference>
<dbReference type="GeneWiki" id="AATK"/>
<dbReference type="GenomeRNAi" id="9625"/>
<dbReference type="Pharos" id="Q6ZMQ8">
    <property type="development level" value="Tbio"/>
</dbReference>
<dbReference type="PRO" id="PR:Q6ZMQ8"/>
<dbReference type="Proteomes" id="UP000005640">
    <property type="component" value="Chromosome 17"/>
</dbReference>
<dbReference type="RNAct" id="Q6ZMQ8">
    <property type="molecule type" value="protein"/>
</dbReference>
<dbReference type="Bgee" id="ENSG00000181409">
    <property type="expression patterns" value="Expressed in sural nerve and 183 other cell types or tissues"/>
</dbReference>
<dbReference type="ExpressionAtlas" id="Q6ZMQ8">
    <property type="expression patterns" value="baseline and differential"/>
</dbReference>
<dbReference type="GO" id="GO:0016020">
    <property type="term" value="C:membrane"/>
    <property type="evidence" value="ECO:0007669"/>
    <property type="project" value="UniProtKB-SubCell"/>
</dbReference>
<dbReference type="GO" id="GO:0048471">
    <property type="term" value="C:perinuclear region of cytoplasm"/>
    <property type="evidence" value="ECO:0007669"/>
    <property type="project" value="UniProtKB-SubCell"/>
</dbReference>
<dbReference type="GO" id="GO:0005524">
    <property type="term" value="F:ATP binding"/>
    <property type="evidence" value="ECO:0007669"/>
    <property type="project" value="UniProtKB-KW"/>
</dbReference>
<dbReference type="GO" id="GO:0106310">
    <property type="term" value="F:protein serine kinase activity"/>
    <property type="evidence" value="ECO:0007669"/>
    <property type="project" value="RHEA"/>
</dbReference>
<dbReference type="GO" id="GO:0004674">
    <property type="term" value="F:protein serine/threonine kinase activity"/>
    <property type="evidence" value="ECO:0007669"/>
    <property type="project" value="UniProtKB-KW"/>
</dbReference>
<dbReference type="GO" id="GO:0004713">
    <property type="term" value="F:protein tyrosine kinase activity"/>
    <property type="evidence" value="ECO:0000318"/>
    <property type="project" value="GO_Central"/>
</dbReference>
<dbReference type="GO" id="GO:0007420">
    <property type="term" value="P:brain development"/>
    <property type="evidence" value="ECO:0000318"/>
    <property type="project" value="GO_Central"/>
</dbReference>
<dbReference type="GO" id="GO:0051402">
    <property type="term" value="P:neuron apoptotic process"/>
    <property type="evidence" value="ECO:0000318"/>
    <property type="project" value="GO_Central"/>
</dbReference>
<dbReference type="CDD" id="cd05087">
    <property type="entry name" value="PTKc_Aatyk1"/>
    <property type="match status" value="1"/>
</dbReference>
<dbReference type="FunFam" id="1.10.510.10:FF:000347">
    <property type="entry name" value="Apoptosis associated tyrosine kinase"/>
    <property type="match status" value="1"/>
</dbReference>
<dbReference type="FunFam" id="3.30.200.20:FF:000275">
    <property type="entry name" value="Apoptosis associated tyrosine kinase"/>
    <property type="match status" value="1"/>
</dbReference>
<dbReference type="Gene3D" id="3.30.200.20">
    <property type="entry name" value="Phosphorylase Kinase, domain 1"/>
    <property type="match status" value="1"/>
</dbReference>
<dbReference type="Gene3D" id="1.10.510.10">
    <property type="entry name" value="Transferase(Phosphotransferase) domain 1"/>
    <property type="match status" value="1"/>
</dbReference>
<dbReference type="InterPro" id="IPR011009">
    <property type="entry name" value="Kinase-like_dom_sf"/>
</dbReference>
<dbReference type="InterPro" id="IPR042817">
    <property type="entry name" value="LMTK1_c"/>
</dbReference>
<dbReference type="InterPro" id="IPR000719">
    <property type="entry name" value="Prot_kinase_dom"/>
</dbReference>
<dbReference type="InterPro" id="IPR017441">
    <property type="entry name" value="Protein_kinase_ATP_BS"/>
</dbReference>
<dbReference type="InterPro" id="IPR001245">
    <property type="entry name" value="Ser-Thr/Tyr_kinase_cat_dom"/>
</dbReference>
<dbReference type="InterPro" id="IPR008266">
    <property type="entry name" value="Tyr_kinase_AS"/>
</dbReference>
<dbReference type="PANTHER" id="PTHR24417">
    <property type="entry name" value="SERINE/THREONINE-PROTEIN KINASE LMTK1"/>
    <property type="match status" value="1"/>
</dbReference>
<dbReference type="PANTHER" id="PTHR24417:SF0">
    <property type="entry name" value="SERINE_THREONINE-PROTEIN KINASE LMTK1"/>
    <property type="match status" value="1"/>
</dbReference>
<dbReference type="Pfam" id="PF07714">
    <property type="entry name" value="PK_Tyr_Ser-Thr"/>
    <property type="match status" value="1"/>
</dbReference>
<dbReference type="PRINTS" id="PR00109">
    <property type="entry name" value="TYRKINASE"/>
</dbReference>
<dbReference type="SUPFAM" id="SSF56112">
    <property type="entry name" value="Protein kinase-like (PK-like)"/>
    <property type="match status" value="1"/>
</dbReference>
<dbReference type="PROSITE" id="PS00107">
    <property type="entry name" value="PROTEIN_KINASE_ATP"/>
    <property type="match status" value="1"/>
</dbReference>
<dbReference type="PROSITE" id="PS50011">
    <property type="entry name" value="PROTEIN_KINASE_DOM"/>
    <property type="match status" value="1"/>
</dbReference>
<dbReference type="PROSITE" id="PS00109">
    <property type="entry name" value="PROTEIN_KINASE_TYR"/>
    <property type="match status" value="1"/>
</dbReference>
<keyword id="KW-0025">Alternative splicing</keyword>
<keyword id="KW-0067">ATP-binding</keyword>
<keyword id="KW-0963">Cytoplasm</keyword>
<keyword id="KW-0418">Kinase</keyword>
<keyword id="KW-0472">Membrane</keyword>
<keyword id="KW-0547">Nucleotide-binding</keyword>
<keyword id="KW-0597">Phosphoprotein</keyword>
<keyword id="KW-1267">Proteomics identification</keyword>
<keyword id="KW-1185">Reference proteome</keyword>
<keyword id="KW-0723">Serine/threonine-protein kinase</keyword>
<keyword id="KW-0808">Transferase</keyword>
<keyword id="KW-0812">Transmembrane</keyword>
<keyword id="KW-1133">Transmembrane helix</keyword>
<evidence type="ECO:0000250" key="1"/>
<evidence type="ECO:0000250" key="2">
    <source>
        <dbReference type="UniProtKB" id="Q80YE4"/>
    </source>
</evidence>
<evidence type="ECO:0000255" key="3"/>
<evidence type="ECO:0000255" key="4">
    <source>
        <dbReference type="PROSITE-ProRule" id="PRU00159"/>
    </source>
</evidence>
<evidence type="ECO:0000255" key="5">
    <source>
        <dbReference type="PROSITE-ProRule" id="PRU10028"/>
    </source>
</evidence>
<evidence type="ECO:0000256" key="6">
    <source>
        <dbReference type="SAM" id="MobiDB-lite"/>
    </source>
</evidence>
<evidence type="ECO:0000269" key="7">
    <source>
    </source>
</evidence>
<evidence type="ECO:0000269" key="8">
    <source>
    </source>
</evidence>
<evidence type="ECO:0000269" key="9">
    <source>
    </source>
</evidence>
<evidence type="ECO:0000269" key="10">
    <source>
    </source>
</evidence>
<evidence type="ECO:0000269" key="11">
    <source>
    </source>
</evidence>
<evidence type="ECO:0000269" key="12">
    <source>
    </source>
</evidence>
<evidence type="ECO:0000303" key="13">
    <source>
    </source>
</evidence>
<evidence type="ECO:0000305" key="14"/>
<evidence type="ECO:0007744" key="15">
    <source>
    </source>
</evidence>
<proteinExistence type="evidence at protein level"/>
<protein>
    <recommendedName>
        <fullName>Serine/threonine-protein kinase LMTK1</fullName>
        <ecNumber>2.7.11.1</ecNumber>
    </recommendedName>
    <alternativeName>
        <fullName>Apoptosis-associated tyrosine kinase</fullName>
        <shortName>AATYK</shortName>
    </alternativeName>
    <alternativeName>
        <fullName>Brain apoptosis-associated tyrosine kinase</fullName>
    </alternativeName>
    <alternativeName>
        <fullName>CDK5-binding protein</fullName>
    </alternativeName>
    <alternativeName>
        <fullName>Lemur tyrosine kinase 1</fullName>
    </alternativeName>
    <alternativeName>
        <fullName>p35-binding protein</fullName>
        <shortName>p35BP</shortName>
    </alternativeName>
</protein>
<comment type="function">
    <text evidence="7">May be involved in neuronal differentiation.</text>
</comment>
<comment type="catalytic activity">
    <reaction>
        <text>L-seryl-[protein] + ATP = O-phospho-L-seryl-[protein] + ADP + H(+)</text>
        <dbReference type="Rhea" id="RHEA:17989"/>
        <dbReference type="Rhea" id="RHEA-COMP:9863"/>
        <dbReference type="Rhea" id="RHEA-COMP:11604"/>
        <dbReference type="ChEBI" id="CHEBI:15378"/>
        <dbReference type="ChEBI" id="CHEBI:29999"/>
        <dbReference type="ChEBI" id="CHEBI:30616"/>
        <dbReference type="ChEBI" id="CHEBI:83421"/>
        <dbReference type="ChEBI" id="CHEBI:456216"/>
        <dbReference type="EC" id="2.7.11.1"/>
    </reaction>
</comment>
<comment type="catalytic activity">
    <reaction>
        <text>L-threonyl-[protein] + ATP = O-phospho-L-threonyl-[protein] + ADP + H(+)</text>
        <dbReference type="Rhea" id="RHEA:46608"/>
        <dbReference type="Rhea" id="RHEA-COMP:11060"/>
        <dbReference type="Rhea" id="RHEA-COMP:11605"/>
        <dbReference type="ChEBI" id="CHEBI:15378"/>
        <dbReference type="ChEBI" id="CHEBI:30013"/>
        <dbReference type="ChEBI" id="CHEBI:30616"/>
        <dbReference type="ChEBI" id="CHEBI:61977"/>
        <dbReference type="ChEBI" id="CHEBI:456216"/>
        <dbReference type="EC" id="2.7.11.1"/>
    </reaction>
</comment>
<comment type="subunit">
    <text evidence="8">Interacts with CDK5.</text>
</comment>
<comment type="interaction">
    <interactant intactId="EBI-2008380">
        <id>Q6ZMQ8</id>
    </interactant>
    <interactant intactId="EBI-357253">
        <id>P62136</id>
        <label>PPP1CA</label>
    </interactant>
    <organismsDiffer>false</organismsDiffer>
    <experiments>3</experiments>
</comment>
<comment type="interaction">
    <interactant intactId="EBI-2008380">
        <id>Q6ZMQ8</id>
    </interactant>
    <interactant intactId="EBI-356283">
        <id>P36873</id>
        <label>PPP1CC</label>
    </interactant>
    <organismsDiffer>false</organismsDiffer>
    <experiments>3</experiments>
</comment>
<comment type="interaction">
    <interactant intactId="EBI-2008380">
        <id>Q6ZMQ8</id>
    </interactant>
    <interactant intactId="EBI-11139477">
        <id>Q96N21</id>
        <label>TEPSIN</label>
    </interactant>
    <organismsDiffer>false</organismsDiffer>
    <experiments>3</experiments>
</comment>
<comment type="interaction">
    <interactant intactId="EBI-2008436">
        <id>Q6ZMQ8-1</id>
    </interactant>
    <interactant intactId="EBI-746189">
        <id>Q15078</id>
        <label>CDK5R1</label>
    </interactant>
    <organismsDiffer>false</organismsDiffer>
    <experiments>2</experiments>
</comment>
<comment type="interaction">
    <interactant intactId="EBI-2008441">
        <id>Q6ZMQ8-2</id>
    </interactant>
    <interactant intactId="EBI-746189">
        <id>Q15078</id>
        <label>CDK5R1</label>
    </interactant>
    <organismsDiffer>false</organismsDiffer>
    <experiments>6</experiments>
</comment>
<comment type="subcellular location">
    <subcellularLocation>
        <location evidence="1">Membrane</location>
        <topology evidence="1">Single-pass type I membrane protein</topology>
    </subcellularLocation>
    <subcellularLocation>
        <location evidence="7">Cytoplasm</location>
    </subcellularLocation>
    <subcellularLocation>
        <location evidence="7">Cytoplasm</location>
        <location evidence="7">Perinuclear region</location>
    </subcellularLocation>
    <text>Predominantly perinuclear.</text>
</comment>
<comment type="alternative products">
    <event type="alternative splicing"/>
    <isoform>
        <id>Q6ZMQ8-1</id>
        <name>1</name>
        <sequence type="displayed"/>
    </isoform>
    <isoform>
        <id>Q6ZMQ8-2</id>
        <name>2</name>
        <name>hAATYKs-p35BP</name>
        <sequence type="described" ref="VSP_020225 VSP_020226 VSP_020227 VSP_020228"/>
    </isoform>
    <isoform>
        <id>Q6ZMQ8-3</id>
        <name>3</name>
        <sequence type="described" ref="VSP_020226 VSP_020227 VSP_020228"/>
    </isoform>
</comment>
<comment type="tissue specificity">
    <text evidence="7">Expressed in brain.</text>
</comment>
<comment type="induction">
    <text>Up-regulated during apoptosis.</text>
</comment>
<comment type="PTM">
    <text evidence="8">Autophosphorylated. Phosphorylated by CDK5.</text>
</comment>
<comment type="similarity">
    <text evidence="4">Belongs to the protein kinase superfamily. Tyr protein kinase family.</text>
</comment>